<feature type="chain" id="PRO_1000015580" description="33 kDa chaperonin">
    <location>
        <begin position="1"/>
        <end position="290"/>
    </location>
</feature>
<feature type="disulfide bond" description="Redox-active" evidence="1">
    <location>
        <begin position="235"/>
        <end position="237"/>
    </location>
</feature>
<feature type="disulfide bond" description="Redox-active" evidence="1">
    <location>
        <begin position="268"/>
        <end position="271"/>
    </location>
</feature>
<reference key="1">
    <citation type="journal article" date="2006" name="Proc. Natl. Acad. Sci. U.S.A.">
        <title>Molecular genetic anatomy of inter- and intraserotype variation in the human bacterial pathogen group A Streptococcus.</title>
        <authorList>
            <person name="Beres S.B."/>
            <person name="Richter E.W."/>
            <person name="Nagiec M.J."/>
            <person name="Sumby P."/>
            <person name="Porcella S.F."/>
            <person name="DeLeo F.R."/>
            <person name="Musser J.M."/>
        </authorList>
    </citation>
    <scope>NUCLEOTIDE SEQUENCE [LARGE SCALE GENOMIC DNA]</scope>
    <source>
        <strain>MGAS10270</strain>
    </source>
</reference>
<sequence length="290" mass="31505">MDKIIKSIAQSGAFRAYVLDSTETVALAQEKHNTLSSSTVALGRTLIANQILAANQKGDSKITVKVIGDSSFGHIISVADTKGHVKGYIQNTGVDIKKTATGEVLVGPFMGNGHFVTIIDYGTGNPYTSTTPLITGEIGEDFAYYLTESEQTPSAIGLNVLLDENDKVKVAGGFMVQVLPGASEEEIARYEKRLQEMPAISYLLASKNHVDALLEAIYGDEPYKRLSEEPLSFQCDCSRERFEAALMTLPKADLQAMIDEDKGAEIVCQFCGTKYQFNESDLEAIINDKA</sequence>
<comment type="function">
    <text evidence="1">Redox regulated molecular chaperone. Protects both thermally unfolding and oxidatively damaged proteins from irreversible aggregation. Plays an important role in the bacterial defense system toward oxidative stress.</text>
</comment>
<comment type="subcellular location">
    <subcellularLocation>
        <location evidence="1">Cytoplasm</location>
    </subcellularLocation>
</comment>
<comment type="PTM">
    <text evidence="1">Under oxidizing conditions two disulfide bonds are formed involving the reactive cysteines. Under reducing conditions zinc is bound to the reactive cysteines and the protein is inactive.</text>
</comment>
<comment type="similarity">
    <text evidence="1">Belongs to the HSP33 family.</text>
</comment>
<keyword id="KW-0143">Chaperone</keyword>
<keyword id="KW-0963">Cytoplasm</keyword>
<keyword id="KW-1015">Disulfide bond</keyword>
<keyword id="KW-0676">Redox-active center</keyword>
<keyword id="KW-0862">Zinc</keyword>
<evidence type="ECO:0000255" key="1">
    <source>
        <dbReference type="HAMAP-Rule" id="MF_00117"/>
    </source>
</evidence>
<proteinExistence type="inferred from homology"/>
<accession>Q1JJ01</accession>
<name>HSLO_STRPD</name>
<organism>
    <name type="scientific">Streptococcus pyogenes serotype M2 (strain MGAS10270)</name>
    <dbReference type="NCBI Taxonomy" id="370552"/>
    <lineage>
        <taxon>Bacteria</taxon>
        <taxon>Bacillati</taxon>
        <taxon>Bacillota</taxon>
        <taxon>Bacilli</taxon>
        <taxon>Lactobacillales</taxon>
        <taxon>Streptococcaceae</taxon>
        <taxon>Streptococcus</taxon>
    </lineage>
</organism>
<gene>
    <name evidence="1" type="primary">hslO</name>
    <name type="ordered locus">MGAS10270_Spy0107</name>
</gene>
<dbReference type="EMBL" id="CP000260">
    <property type="protein sequence ID" value="ABF33172.1"/>
    <property type="molecule type" value="Genomic_DNA"/>
</dbReference>
<dbReference type="SMR" id="Q1JJ01"/>
<dbReference type="KEGG" id="sph:MGAS10270_Spy0107"/>
<dbReference type="HOGENOM" id="CLU_054493_1_0_9"/>
<dbReference type="Proteomes" id="UP000002436">
    <property type="component" value="Chromosome"/>
</dbReference>
<dbReference type="GO" id="GO:0005737">
    <property type="term" value="C:cytoplasm"/>
    <property type="evidence" value="ECO:0007669"/>
    <property type="project" value="UniProtKB-SubCell"/>
</dbReference>
<dbReference type="GO" id="GO:0044183">
    <property type="term" value="F:protein folding chaperone"/>
    <property type="evidence" value="ECO:0007669"/>
    <property type="project" value="TreeGrafter"/>
</dbReference>
<dbReference type="GO" id="GO:0051082">
    <property type="term" value="F:unfolded protein binding"/>
    <property type="evidence" value="ECO:0007669"/>
    <property type="project" value="UniProtKB-UniRule"/>
</dbReference>
<dbReference type="GO" id="GO:0042026">
    <property type="term" value="P:protein refolding"/>
    <property type="evidence" value="ECO:0007669"/>
    <property type="project" value="TreeGrafter"/>
</dbReference>
<dbReference type="CDD" id="cd00498">
    <property type="entry name" value="Hsp33"/>
    <property type="match status" value="1"/>
</dbReference>
<dbReference type="Gene3D" id="3.55.30.10">
    <property type="entry name" value="Hsp33 domain"/>
    <property type="match status" value="1"/>
</dbReference>
<dbReference type="Gene3D" id="3.90.1280.10">
    <property type="entry name" value="HSP33 redox switch-like"/>
    <property type="match status" value="1"/>
</dbReference>
<dbReference type="HAMAP" id="MF_00117">
    <property type="entry name" value="HslO"/>
    <property type="match status" value="1"/>
</dbReference>
<dbReference type="InterPro" id="IPR000397">
    <property type="entry name" value="Heat_shock_Hsp33"/>
</dbReference>
<dbReference type="InterPro" id="IPR016154">
    <property type="entry name" value="Heat_shock_Hsp33_C"/>
</dbReference>
<dbReference type="InterPro" id="IPR016153">
    <property type="entry name" value="Heat_shock_Hsp33_N"/>
</dbReference>
<dbReference type="NCBIfam" id="NF001033">
    <property type="entry name" value="PRK00114.1"/>
    <property type="match status" value="1"/>
</dbReference>
<dbReference type="PANTHER" id="PTHR30111">
    <property type="entry name" value="33 KDA CHAPERONIN"/>
    <property type="match status" value="1"/>
</dbReference>
<dbReference type="PANTHER" id="PTHR30111:SF1">
    <property type="entry name" value="33 KDA CHAPERONIN"/>
    <property type="match status" value="1"/>
</dbReference>
<dbReference type="Pfam" id="PF01430">
    <property type="entry name" value="HSP33"/>
    <property type="match status" value="1"/>
</dbReference>
<dbReference type="PIRSF" id="PIRSF005261">
    <property type="entry name" value="Heat_shock_Hsp33"/>
    <property type="match status" value="1"/>
</dbReference>
<dbReference type="SUPFAM" id="SSF64397">
    <property type="entry name" value="Hsp33 domain"/>
    <property type="match status" value="1"/>
</dbReference>
<dbReference type="SUPFAM" id="SSF118352">
    <property type="entry name" value="HSP33 redox switch-like"/>
    <property type="match status" value="1"/>
</dbReference>
<protein>
    <recommendedName>
        <fullName evidence="1">33 kDa chaperonin</fullName>
    </recommendedName>
    <alternativeName>
        <fullName evidence="1">Heat shock protein 33 homolog</fullName>
        <shortName evidence="1">HSP33</shortName>
    </alternativeName>
</protein>